<comment type="subcellular location">
    <subcellularLocation>
        <location evidence="1">Membrane</location>
        <topology evidence="1">Single-pass membrane protein</topology>
    </subcellularLocation>
</comment>
<comment type="similarity">
    <text evidence="3">Belongs to the NPIP family.</text>
</comment>
<accession>F8W0I5</accession>
<protein>
    <recommendedName>
        <fullName evidence="3">Nuclear pore complex-interacting protein family member B12</fullName>
    </recommendedName>
</protein>
<organism>
    <name type="scientific">Homo sapiens</name>
    <name type="common">Human</name>
    <dbReference type="NCBI Taxonomy" id="9606"/>
    <lineage>
        <taxon>Eukaryota</taxon>
        <taxon>Metazoa</taxon>
        <taxon>Chordata</taxon>
        <taxon>Craniata</taxon>
        <taxon>Vertebrata</taxon>
        <taxon>Euteleostomi</taxon>
        <taxon>Mammalia</taxon>
        <taxon>Eutheria</taxon>
        <taxon>Euarchontoglires</taxon>
        <taxon>Primates</taxon>
        <taxon>Haplorrhini</taxon>
        <taxon>Catarrhini</taxon>
        <taxon>Hominidae</taxon>
        <taxon>Homo</taxon>
    </lineage>
</organism>
<feature type="chain" id="PRO_0000450480" description="Nuclear pore complex-interacting protein family member B12">
    <location>
        <begin position="1"/>
        <end position="928"/>
    </location>
</feature>
<feature type="transmembrane region" description="Helical" evidence="1">
    <location>
        <begin position="73"/>
        <end position="93"/>
    </location>
</feature>
<feature type="region of interest" description="Disordered" evidence="2">
    <location>
        <begin position="242"/>
        <end position="452"/>
    </location>
</feature>
<feature type="region of interest" description="Disordered" evidence="2">
    <location>
        <begin position="663"/>
        <end position="928"/>
    </location>
</feature>
<feature type="compositionally biased region" description="Polar residues" evidence="2">
    <location>
        <begin position="252"/>
        <end position="263"/>
    </location>
</feature>
<feature type="compositionally biased region" description="Pro residues" evidence="2">
    <location>
        <begin position="349"/>
        <end position="359"/>
    </location>
</feature>
<feature type="compositionally biased region" description="Basic and acidic residues" evidence="2">
    <location>
        <begin position="406"/>
        <end position="416"/>
    </location>
</feature>
<feature type="compositionally biased region" description="Basic and acidic residues" evidence="2">
    <location>
        <begin position="698"/>
        <end position="708"/>
    </location>
</feature>
<feature type="compositionally biased region" description="Basic and acidic residues" evidence="2">
    <location>
        <begin position="740"/>
        <end position="750"/>
    </location>
</feature>
<feature type="compositionally biased region" description="Basic and acidic residues" evidence="2">
    <location>
        <begin position="782"/>
        <end position="792"/>
    </location>
</feature>
<name>NPB12_HUMAN</name>
<gene>
    <name evidence="4" type="primary">NPIPB12</name>
</gene>
<evidence type="ECO:0000255" key="1"/>
<evidence type="ECO:0000256" key="2">
    <source>
        <dbReference type="SAM" id="MobiDB-lite"/>
    </source>
</evidence>
<evidence type="ECO:0000305" key="3"/>
<evidence type="ECO:0000312" key="4">
    <source>
        <dbReference type="HGNC" id="HGNC:37491"/>
    </source>
</evidence>
<keyword id="KW-0472">Membrane</keyword>
<keyword id="KW-1185">Reference proteome</keyword>
<keyword id="KW-0812">Transmembrane</keyword>
<keyword id="KW-1133">Transmembrane helix</keyword>
<proteinExistence type="inferred from homology"/>
<dbReference type="EMBL" id="AC133555">
    <property type="status" value="NOT_ANNOTATED_CDS"/>
    <property type="molecule type" value="Genomic_DNA"/>
</dbReference>
<dbReference type="RefSeq" id="NP_001342330.1">
    <property type="nucleotide sequence ID" value="NM_001355401.2"/>
</dbReference>
<dbReference type="RefSeq" id="NP_001382860.1">
    <property type="nucleotide sequence ID" value="NM_001395931.1"/>
</dbReference>
<dbReference type="FunCoup" id="F8W0I5">
    <property type="interactions" value="12"/>
</dbReference>
<dbReference type="STRING" id="9606.ENSP00000447597"/>
<dbReference type="GlyGen" id="F8W0I5">
    <property type="glycosylation" value="1 site"/>
</dbReference>
<dbReference type="jPOST" id="F8W0I5"/>
<dbReference type="MassIVE" id="F8W0I5"/>
<dbReference type="PaxDb" id="9606-ENSP00000447597"/>
<dbReference type="Ensembl" id="ENST00000550665.6">
    <property type="protein sequence ID" value="ENSP00000447597.2"/>
    <property type="gene ID" value="ENSG00000169203.18"/>
</dbReference>
<dbReference type="GeneID" id="440353"/>
<dbReference type="MANE-Select" id="ENST00000550665.6">
    <property type="protein sequence ID" value="ENSP00000447597.2"/>
    <property type="RefSeq nucleotide sequence ID" value="NM_001395931.1"/>
    <property type="RefSeq protein sequence ID" value="NP_001382860.1"/>
</dbReference>
<dbReference type="UCSC" id="uc021tgb.2">
    <property type="organism name" value="human"/>
</dbReference>
<dbReference type="AGR" id="HGNC:37491"/>
<dbReference type="GeneCards" id="NPIPB12"/>
<dbReference type="HGNC" id="HGNC:37491">
    <property type="gene designation" value="NPIPB12"/>
</dbReference>
<dbReference type="HPA" id="ENSG00000169203">
    <property type="expression patterns" value="Low tissue specificity"/>
</dbReference>
<dbReference type="neXtProt" id="NX_F8W0I5"/>
<dbReference type="VEuPathDB" id="HostDB:ENSG00000169203"/>
<dbReference type="eggNOG" id="ENOG502TDBV">
    <property type="taxonomic scope" value="Eukaryota"/>
</dbReference>
<dbReference type="GeneTree" id="ENSGT00540000072033"/>
<dbReference type="HOGENOM" id="CLU_458991_0_0_1"/>
<dbReference type="InParanoid" id="F8W0I5"/>
<dbReference type="OrthoDB" id="17754at314295"/>
<dbReference type="PRO" id="PR:F8W0I5"/>
<dbReference type="Proteomes" id="UP000005640">
    <property type="component" value="Chromosome 16"/>
</dbReference>
<dbReference type="Bgee" id="ENSG00000169203">
    <property type="expression patterns" value="Expressed in right hemisphere of cerebellum and 95 other cell types or tissues"/>
</dbReference>
<dbReference type="ExpressionAtlas" id="F8W0I5">
    <property type="expression patterns" value="baseline and differential"/>
</dbReference>
<dbReference type="GO" id="GO:0016020">
    <property type="term" value="C:membrane"/>
    <property type="evidence" value="ECO:0007669"/>
    <property type="project" value="UniProtKB-SubCell"/>
</dbReference>
<dbReference type="InterPro" id="IPR048893">
    <property type="entry name" value="NPB13-like_MII_rpt"/>
</dbReference>
<dbReference type="InterPro" id="IPR009443">
    <property type="entry name" value="NPIP"/>
</dbReference>
<dbReference type="InterPro" id="IPR054697">
    <property type="entry name" value="NPIP_N"/>
</dbReference>
<dbReference type="PANTHER" id="PTHR15438">
    <property type="entry name" value="NUCLEAR PORE COMPLEX INTERACTING PROTEIN"/>
    <property type="match status" value="1"/>
</dbReference>
<dbReference type="PANTHER" id="PTHR15438:SF5">
    <property type="entry name" value="NUCLEAR PORE COMPLEX-INTERACTING PROTEIN FAMILY MEMBER A2-RELATED"/>
    <property type="match status" value="1"/>
</dbReference>
<dbReference type="Pfam" id="PF20885">
    <property type="entry name" value="NPB13-l_MII_rpt"/>
    <property type="match status" value="2"/>
</dbReference>
<dbReference type="Pfam" id="PF06409">
    <property type="entry name" value="NPIP"/>
    <property type="match status" value="1"/>
</dbReference>
<sequence>MVKLSIVLTPQFLSHDQGQLTKELQQHVKSVTCPCEYLRKVINTLADHHHRGTDFGGSPWLHVIIAFPTSYKVVITLWIVYLWVSLLKTIFWSRNGHDGSTDVQQRAWRSNRRRQEGLRSICMHTKKRVSSFRGNKIGLKDVITLRRHVETKVRAKIRKRKVTTKINHHDKINGKRKTARKQKMFQRAQELRRRAEDYHKCKIPPSARKALCNWVRMAAAEHRHSSGLPYWPYLTAETLKNRMGHQPPPPTQQHSITDNSLSLKTPPECVLTPLPPSADDNLKTPPECVLTPLPPSADDNLKTPPECLLTPLPPSADDNLKTPPECLLTPLPPSADDNLKTPPECLLTPLPPSAPPSAPPSADDNLKTRAECLLHPLPPSADDNLKTPSERQLTPLPPSAPPSADDNIKTPAERLRGPLPPSADDNLKTPSERQLTPLPPSAPPSADDNIKTPAFHPQRMIISRHLPSVSSLPFHPQLHSQQMIISRYLLSVCGFRFHHQPMIISRHLPSVSSLPFHPQLHPQQMIISRHLPSVCGGRFHPQRMIISRHLPSVSSLPFHPQLHPQQMIISRHLPSVCGGRFHPQRMIISRHLPSVSSLPFHPQLHPQQMIISRHLPSVCGGRFHPQRMIISRHLPSVSSLPFHPQLHPQQMIISRHLPSVCGERLRGPLPPSADDNLKTPSERQLTPLPPSAPPSADDNIKTPAERLRGPLPPSADDNLKTPSERQLTPLPPSAPPSADDNIKTPAERLRGPLPPSADDNLKTPSERQLTPLPPSAPPSADDNIKTPAERLRGPLPPSADDNLKTPPLATQEAEAEKPRKPKRQRAAEMEPPPEPKRRRVGDVEPSRKPKRRRAADVEPSSPEPKRRRVGDVEPSRKPKRRRAADVEPSSPEPKRRRVGDVEPSRKPKRRRAADVEPSLPEPKRRRLS</sequence>
<reference key="1">
    <citation type="journal article" date="2004" name="Nature">
        <title>The sequence and analysis of duplication-rich human chromosome 16.</title>
        <authorList>
            <person name="Martin J."/>
            <person name="Han C."/>
            <person name="Gordon L.A."/>
            <person name="Terry A."/>
            <person name="Prabhakar S."/>
            <person name="She X."/>
            <person name="Xie G."/>
            <person name="Hellsten U."/>
            <person name="Chan Y.M."/>
            <person name="Altherr M."/>
            <person name="Couronne O."/>
            <person name="Aerts A."/>
            <person name="Bajorek E."/>
            <person name="Black S."/>
            <person name="Blumer H."/>
            <person name="Branscomb E."/>
            <person name="Brown N.C."/>
            <person name="Bruno W.J."/>
            <person name="Buckingham J.M."/>
            <person name="Callen D.F."/>
            <person name="Campbell C.S."/>
            <person name="Campbell M.L."/>
            <person name="Campbell E.W."/>
            <person name="Caoile C."/>
            <person name="Challacombe J.F."/>
            <person name="Chasteen L.A."/>
            <person name="Chertkov O."/>
            <person name="Chi H.C."/>
            <person name="Christensen M."/>
            <person name="Clark L.M."/>
            <person name="Cohn J.D."/>
            <person name="Denys M."/>
            <person name="Detter J.C."/>
            <person name="Dickson M."/>
            <person name="Dimitrijevic-Bussod M."/>
            <person name="Escobar J."/>
            <person name="Fawcett J.J."/>
            <person name="Flowers D."/>
            <person name="Fotopulos D."/>
            <person name="Glavina T."/>
            <person name="Gomez M."/>
            <person name="Gonzales E."/>
            <person name="Goodstein D."/>
            <person name="Goodwin L.A."/>
            <person name="Grady D.L."/>
            <person name="Grigoriev I."/>
            <person name="Groza M."/>
            <person name="Hammon N."/>
            <person name="Hawkins T."/>
            <person name="Haydu L."/>
            <person name="Hildebrand C.E."/>
            <person name="Huang W."/>
            <person name="Israni S."/>
            <person name="Jett J."/>
            <person name="Jewett P.B."/>
            <person name="Kadner K."/>
            <person name="Kimball H."/>
            <person name="Kobayashi A."/>
            <person name="Krawczyk M.-C."/>
            <person name="Leyba T."/>
            <person name="Longmire J.L."/>
            <person name="Lopez F."/>
            <person name="Lou Y."/>
            <person name="Lowry S."/>
            <person name="Ludeman T."/>
            <person name="Manohar C.F."/>
            <person name="Mark G.A."/>
            <person name="McMurray K.L."/>
            <person name="Meincke L.J."/>
            <person name="Morgan J."/>
            <person name="Moyzis R.K."/>
            <person name="Mundt M.O."/>
            <person name="Munk A.C."/>
            <person name="Nandkeshwar R.D."/>
            <person name="Pitluck S."/>
            <person name="Pollard M."/>
            <person name="Predki P."/>
            <person name="Parson-Quintana B."/>
            <person name="Ramirez L."/>
            <person name="Rash S."/>
            <person name="Retterer J."/>
            <person name="Ricke D.O."/>
            <person name="Robinson D.L."/>
            <person name="Rodriguez A."/>
            <person name="Salamov A."/>
            <person name="Saunders E.H."/>
            <person name="Scott D."/>
            <person name="Shough T."/>
            <person name="Stallings R.L."/>
            <person name="Stalvey M."/>
            <person name="Sutherland R.D."/>
            <person name="Tapia R."/>
            <person name="Tesmer J.G."/>
            <person name="Thayer N."/>
            <person name="Thompson L.S."/>
            <person name="Tice H."/>
            <person name="Torney D.C."/>
            <person name="Tran-Gyamfi M."/>
            <person name="Tsai M."/>
            <person name="Ulanovsky L.E."/>
            <person name="Ustaszewska A."/>
            <person name="Vo N."/>
            <person name="White P.S."/>
            <person name="Williams A.L."/>
            <person name="Wills P.L."/>
            <person name="Wu J.-R."/>
            <person name="Wu K."/>
            <person name="Yang J."/>
            <person name="DeJong P."/>
            <person name="Bruce D."/>
            <person name="Doggett N.A."/>
            <person name="Deaven L."/>
            <person name="Schmutz J."/>
            <person name="Grimwood J."/>
            <person name="Richardson P."/>
            <person name="Rokhsar D.S."/>
            <person name="Eichler E.E."/>
            <person name="Gilna P."/>
            <person name="Lucas S.M."/>
            <person name="Myers R.M."/>
            <person name="Rubin E.M."/>
            <person name="Pennacchio L.A."/>
        </authorList>
    </citation>
    <scope>NUCLEOTIDE SEQUENCE [LARGE SCALE GENOMIC DNA]</scope>
</reference>